<comment type="function">
    <text evidence="2">Part of the Sec protein translocase complex. Interacts with the SecYEG preprotein conducting channel. SecDF uses the proton motive force (PMF) to complete protein translocation after the ATP-dependent function of SecA.</text>
</comment>
<comment type="subunit">
    <text evidence="2">Forms a complex with SecF. Part of the essential Sec protein translocation apparatus which comprises SecA, SecYEG and auxiliary proteins SecDF-YajC and YidC.</text>
</comment>
<comment type="subcellular location">
    <subcellularLocation>
        <location evidence="2">Cell inner membrane</location>
        <topology evidence="2">Multi-pass membrane protein</topology>
    </subcellularLocation>
</comment>
<comment type="similarity">
    <text evidence="2">Belongs to the SecD/SecF family. SecD subfamily.</text>
</comment>
<comment type="sequence caution" evidence="3">
    <conflict type="erroneous initiation">
        <sequence resource="EMBL-CDS" id="BAB33882"/>
    </conflict>
    <text>Truncated N-terminus.</text>
</comment>
<feature type="chain" id="PRO_0000095961" description="Protein translocase subunit SecD">
    <location>
        <begin position="1"/>
        <end position="615"/>
    </location>
</feature>
<feature type="topological domain" description="Cytoplasmic" evidence="1">
    <location>
        <begin position="1"/>
        <end position="9"/>
    </location>
</feature>
<feature type="transmembrane region" description="Helical" evidence="2">
    <location>
        <begin position="10"/>
        <end position="29"/>
    </location>
</feature>
<feature type="topological domain" description="Periplasmic" evidence="1">
    <location>
        <begin position="30"/>
        <end position="455"/>
    </location>
</feature>
<feature type="transmembrane region" description="Helical" evidence="2">
    <location>
        <begin position="456"/>
        <end position="472"/>
    </location>
</feature>
<feature type="topological domain" description="Cytoplasmic" evidence="1">
    <location>
        <begin position="473"/>
        <end position="476"/>
    </location>
</feature>
<feature type="topological domain" description="Periplasmic" evidence="1">
    <location>
        <begin position="498"/>
        <end position="501"/>
    </location>
</feature>
<feature type="transmembrane region" description="Helical" evidence="2">
    <location>
        <begin position="502"/>
        <end position="518"/>
    </location>
</feature>
<feature type="topological domain" description="Cytoplasmic" evidence="1">
    <location>
        <begin position="519"/>
        <end position="563"/>
    </location>
</feature>
<feature type="transmembrane region" description="Helical" evidence="2">
    <location>
        <begin position="564"/>
        <end position="580"/>
    </location>
</feature>
<feature type="topological domain" description="Periplasmic" evidence="1">
    <location>
        <begin position="581"/>
        <end position="585"/>
    </location>
</feature>
<feature type="transmembrane region" description="Helical" evidence="2">
    <location>
        <begin position="586"/>
        <end position="605"/>
    </location>
</feature>
<feature type="topological domain" description="Cytoplasmic" evidence="1">
    <location>
        <begin position="606"/>
        <end position="615"/>
    </location>
</feature>
<organism>
    <name type="scientific">Escherichia coli O157:H7</name>
    <dbReference type="NCBI Taxonomy" id="83334"/>
    <lineage>
        <taxon>Bacteria</taxon>
        <taxon>Pseudomonadati</taxon>
        <taxon>Pseudomonadota</taxon>
        <taxon>Gammaproteobacteria</taxon>
        <taxon>Enterobacterales</taxon>
        <taxon>Enterobacteriaceae</taxon>
        <taxon>Escherichia</taxon>
    </lineage>
</organism>
<accession>P0AG91</accession>
<accession>P19673</accession>
<accession>P72348</accession>
<accession>P77531</accession>
<name>SECD_ECO57</name>
<sequence length="615" mass="66632">MLNRYPLWKYVMLIVVIVIGLLYALPNLFGEDPAVQITGARGVAASEQTLIQVQKTLQEEKITAKSVALEEGAILARFDSTDTQLRAREALMGVMGDKYVVALNLAPATPRWLAAIHAEPMKLGLDLRGGVHFLMEVDMDTALGKLQEQNIDSLRSDLREKGIPYTTVRKENNYGLSITFRDAKARDEAIAYLSKRHPDLVISSQGSNQLRAVMSDARLSEAREYAVQQNINILRNRVNQLGVAEPVVQRQGADRIVVELPGIQDTARAKEILGATATLEFRLVNTNVDQAAAASGRVPGDSEVKQTREGQPVVLYKRVILTGDHITDSTSSQDEYNQPQVNISLDSAGGNIMSNFTKDNIGKPMATLFVEYKDSGKKDANGRAVLVKQEEVINIANIQSRLGNSFRITGINNPNEARQLSLLLRAGALIAPIQIVEERTIGPTLGMQNIEQGLEACLAGLLVSILFMIIFYKKFGLIATSALIANLILIVGIMSLLPGATLSMPGIAGIVLTLAVAVDANVLINERIKEELSNGRTVQQAIDEGYRGAFSSIFDANITTLIKVIILYAVGTGAIKGFAITTGIGVATSMFTAIVGTRAIVNLLYGGKRVKKLSI</sequence>
<evidence type="ECO:0000255" key="1"/>
<evidence type="ECO:0000255" key="2">
    <source>
        <dbReference type="HAMAP-Rule" id="MF_01463"/>
    </source>
</evidence>
<evidence type="ECO:0000305" key="3"/>
<reference key="1">
    <citation type="journal article" date="2001" name="Nature">
        <title>Genome sequence of enterohaemorrhagic Escherichia coli O157:H7.</title>
        <authorList>
            <person name="Perna N.T."/>
            <person name="Plunkett G. III"/>
            <person name="Burland V."/>
            <person name="Mau B."/>
            <person name="Glasner J.D."/>
            <person name="Rose D.J."/>
            <person name="Mayhew G.F."/>
            <person name="Evans P.S."/>
            <person name="Gregor J."/>
            <person name="Kirkpatrick H.A."/>
            <person name="Posfai G."/>
            <person name="Hackett J."/>
            <person name="Klink S."/>
            <person name="Boutin A."/>
            <person name="Shao Y."/>
            <person name="Miller L."/>
            <person name="Grotbeck E.J."/>
            <person name="Davis N.W."/>
            <person name="Lim A."/>
            <person name="Dimalanta E.T."/>
            <person name="Potamousis K."/>
            <person name="Apodaca J."/>
            <person name="Anantharaman T.S."/>
            <person name="Lin J."/>
            <person name="Yen G."/>
            <person name="Schwartz D.C."/>
            <person name="Welch R.A."/>
            <person name="Blattner F.R."/>
        </authorList>
    </citation>
    <scope>NUCLEOTIDE SEQUENCE [LARGE SCALE GENOMIC DNA]</scope>
    <source>
        <strain>O157:H7 / EDL933 / ATCC 700927 / EHEC</strain>
    </source>
</reference>
<reference key="2">
    <citation type="journal article" date="2001" name="DNA Res.">
        <title>Complete genome sequence of enterohemorrhagic Escherichia coli O157:H7 and genomic comparison with a laboratory strain K-12.</title>
        <authorList>
            <person name="Hayashi T."/>
            <person name="Makino K."/>
            <person name="Ohnishi M."/>
            <person name="Kurokawa K."/>
            <person name="Ishii K."/>
            <person name="Yokoyama K."/>
            <person name="Han C.-G."/>
            <person name="Ohtsubo E."/>
            <person name="Nakayama K."/>
            <person name="Murata T."/>
            <person name="Tanaka M."/>
            <person name="Tobe T."/>
            <person name="Iida T."/>
            <person name="Takami H."/>
            <person name="Honda T."/>
            <person name="Sasakawa C."/>
            <person name="Ogasawara N."/>
            <person name="Yasunaga T."/>
            <person name="Kuhara S."/>
            <person name="Shiba T."/>
            <person name="Hattori M."/>
            <person name="Shinagawa H."/>
        </authorList>
    </citation>
    <scope>NUCLEOTIDE SEQUENCE [LARGE SCALE GENOMIC DNA]</scope>
    <source>
        <strain>O157:H7 / Sakai / RIMD 0509952 / EHEC</strain>
    </source>
</reference>
<keyword id="KW-0997">Cell inner membrane</keyword>
<keyword id="KW-1003">Cell membrane</keyword>
<keyword id="KW-0472">Membrane</keyword>
<keyword id="KW-0653">Protein transport</keyword>
<keyword id="KW-1185">Reference proteome</keyword>
<keyword id="KW-0811">Translocation</keyword>
<keyword id="KW-0812">Transmembrane</keyword>
<keyword id="KW-1133">Transmembrane helix</keyword>
<keyword id="KW-0813">Transport</keyword>
<proteinExistence type="inferred from homology"/>
<dbReference type="EMBL" id="AE005174">
    <property type="protein sequence ID" value="AAG54755.1"/>
    <property type="molecule type" value="Genomic_DNA"/>
</dbReference>
<dbReference type="EMBL" id="BA000007">
    <property type="protein sequence ID" value="BAB33882.2"/>
    <property type="status" value="ALT_INIT"/>
    <property type="molecule type" value="Genomic_DNA"/>
</dbReference>
<dbReference type="PIR" id="C90686">
    <property type="entry name" value="C90686"/>
</dbReference>
<dbReference type="PIR" id="G85536">
    <property type="entry name" value="G85536"/>
</dbReference>
<dbReference type="RefSeq" id="NP_308486.1">
    <property type="nucleotide sequence ID" value="NC_002695.1"/>
</dbReference>
<dbReference type="RefSeq" id="WP_000934822.1">
    <property type="nucleotide sequence ID" value="NZ_VOAI01000005.1"/>
</dbReference>
<dbReference type="SMR" id="P0AG91"/>
<dbReference type="STRING" id="155864.Z0507"/>
<dbReference type="GeneID" id="914561"/>
<dbReference type="GeneID" id="93777052"/>
<dbReference type="KEGG" id="ece:Z0507"/>
<dbReference type="KEGG" id="ecs:ECs_0459"/>
<dbReference type="PATRIC" id="fig|386585.9.peg.559"/>
<dbReference type="eggNOG" id="COG0342">
    <property type="taxonomic scope" value="Bacteria"/>
</dbReference>
<dbReference type="HOGENOM" id="CLU_007894_4_3_6"/>
<dbReference type="OMA" id="NIEKGFH"/>
<dbReference type="Proteomes" id="UP000000558">
    <property type="component" value="Chromosome"/>
</dbReference>
<dbReference type="Proteomes" id="UP000002519">
    <property type="component" value="Chromosome"/>
</dbReference>
<dbReference type="GO" id="GO:0005886">
    <property type="term" value="C:plasma membrane"/>
    <property type="evidence" value="ECO:0007669"/>
    <property type="project" value="UniProtKB-SubCell"/>
</dbReference>
<dbReference type="GO" id="GO:0015450">
    <property type="term" value="F:protein-transporting ATPase activity"/>
    <property type="evidence" value="ECO:0007669"/>
    <property type="project" value="InterPro"/>
</dbReference>
<dbReference type="GO" id="GO:0065002">
    <property type="term" value="P:intracellular protein transmembrane transport"/>
    <property type="evidence" value="ECO:0007669"/>
    <property type="project" value="UniProtKB-UniRule"/>
</dbReference>
<dbReference type="GO" id="GO:0006605">
    <property type="term" value="P:protein targeting"/>
    <property type="evidence" value="ECO:0007669"/>
    <property type="project" value="UniProtKB-UniRule"/>
</dbReference>
<dbReference type="GO" id="GO:0043952">
    <property type="term" value="P:protein transport by the Sec complex"/>
    <property type="evidence" value="ECO:0007669"/>
    <property type="project" value="UniProtKB-UniRule"/>
</dbReference>
<dbReference type="FunFam" id="1.20.1640.10:FF:000004">
    <property type="entry name" value="Protein translocase subunit SecD"/>
    <property type="match status" value="1"/>
</dbReference>
<dbReference type="FunFam" id="3.30.1360.200:FF:000001">
    <property type="entry name" value="Protein translocase subunit SecD"/>
    <property type="match status" value="1"/>
</dbReference>
<dbReference type="FunFam" id="3.30.70.3400:FF:000001">
    <property type="entry name" value="Protein translocase subunit SecD"/>
    <property type="match status" value="1"/>
</dbReference>
<dbReference type="FunFam" id="3.30.70.3400:FF:000002">
    <property type="entry name" value="Protein translocase subunit SecD"/>
    <property type="match status" value="1"/>
</dbReference>
<dbReference type="Gene3D" id="3.30.1360.200">
    <property type="match status" value="1"/>
</dbReference>
<dbReference type="Gene3D" id="3.30.70.260">
    <property type="match status" value="1"/>
</dbReference>
<dbReference type="Gene3D" id="3.30.70.3400">
    <property type="match status" value="2"/>
</dbReference>
<dbReference type="Gene3D" id="1.20.1640.10">
    <property type="entry name" value="Multidrug efflux transporter AcrB transmembrane domain"/>
    <property type="match status" value="1"/>
</dbReference>
<dbReference type="HAMAP" id="MF_01463_B">
    <property type="entry name" value="SecD_B"/>
    <property type="match status" value="1"/>
</dbReference>
<dbReference type="InterPro" id="IPR005791">
    <property type="entry name" value="SecD"/>
</dbReference>
<dbReference type="InterPro" id="IPR027398">
    <property type="entry name" value="SecD-TM"/>
</dbReference>
<dbReference type="InterPro" id="IPR022813">
    <property type="entry name" value="SecD/SecF_arch_bac"/>
</dbReference>
<dbReference type="InterPro" id="IPR022646">
    <property type="entry name" value="SecD/SecF_CS"/>
</dbReference>
<dbReference type="InterPro" id="IPR048631">
    <property type="entry name" value="SecD_1st"/>
</dbReference>
<dbReference type="InterPro" id="IPR048634">
    <property type="entry name" value="SecD_SecF_C"/>
</dbReference>
<dbReference type="InterPro" id="IPR055344">
    <property type="entry name" value="SecD_SecF_C_bact"/>
</dbReference>
<dbReference type="InterPro" id="IPR054384">
    <property type="entry name" value="SecDF_P1_head"/>
</dbReference>
<dbReference type="NCBIfam" id="TIGR00916">
    <property type="entry name" value="2A0604s01"/>
    <property type="match status" value="1"/>
</dbReference>
<dbReference type="NCBIfam" id="TIGR01129">
    <property type="entry name" value="secD"/>
    <property type="match status" value="1"/>
</dbReference>
<dbReference type="PANTHER" id="PTHR30081:SF1">
    <property type="entry name" value="PROTEIN TRANSLOCASE SUBUNIT SECD"/>
    <property type="match status" value="1"/>
</dbReference>
<dbReference type="PANTHER" id="PTHR30081">
    <property type="entry name" value="PROTEIN-EXPORT MEMBRANE PROTEIN SEC"/>
    <property type="match status" value="1"/>
</dbReference>
<dbReference type="Pfam" id="PF07549">
    <property type="entry name" value="Sec_GG"/>
    <property type="match status" value="1"/>
</dbReference>
<dbReference type="Pfam" id="PF13721">
    <property type="entry name" value="SecD-TM1"/>
    <property type="match status" value="1"/>
</dbReference>
<dbReference type="Pfam" id="PF21760">
    <property type="entry name" value="SecD_1st"/>
    <property type="match status" value="1"/>
</dbReference>
<dbReference type="Pfam" id="PF02355">
    <property type="entry name" value="SecD_SecF_C"/>
    <property type="match status" value="1"/>
</dbReference>
<dbReference type="Pfam" id="PF22599">
    <property type="entry name" value="SecDF_P1_head"/>
    <property type="match status" value="1"/>
</dbReference>
<dbReference type="SUPFAM" id="SSF82866">
    <property type="entry name" value="Multidrug efflux transporter AcrB transmembrane domain"/>
    <property type="match status" value="1"/>
</dbReference>
<protein>
    <recommendedName>
        <fullName evidence="2">Protein translocase subunit SecD</fullName>
    </recommendedName>
</protein>
<gene>
    <name evidence="2" type="primary">secD</name>
    <name type="ordered locus">Z0507</name>
    <name type="ordered locus">ECs0459</name>
</gene>